<sequence>MAKQPGLDFQSAKGGLGELKRRLLFVIGALIVFRIGSFIPIPGIDATVLAKLLEQQRGTIIEMFNMFSGGALSRASIFALGIMPYISASIIIQLLTVVHPALAEVKKEGEAGRRKISQYTRYGTLVLAIFQSIGIATGLPNMPGMQGLVMNPGFAFYFTAVVSLVTGTMFLMWLGEQITERGIGNGISIIIFAGIVAGLPPAVAHTIEQARQGDLHFLLLLLVAVLVFAVTFFVVFIERGQRRIVVNYAKRQQGRRVYAAQSTHLPLKVNMAGVIPAIFASSIILFPATIASWFGGGTGWNWLTTVSLYLQPGQPLYVLLYASAIIFFCFFYTALVFNPRETADNLKKSGAFVPGI</sequence>
<feature type="chain" id="PRO_0000131714" description="Protein translocase subunit SecY">
    <location>
        <begin position="1"/>
        <end position="356" status="greater than"/>
    </location>
</feature>
<feature type="transmembrane region" description="Helical" evidence="1">
    <location>
        <begin position="24"/>
        <end position="44"/>
    </location>
</feature>
<feature type="transmembrane region" description="Helical" evidence="1">
    <location>
        <begin position="77"/>
        <end position="97"/>
    </location>
</feature>
<feature type="transmembrane region" description="Helical" evidence="1">
    <location>
        <begin position="125"/>
        <end position="145"/>
    </location>
</feature>
<feature type="transmembrane region" description="Helical" evidence="1">
    <location>
        <begin position="154"/>
        <end position="174"/>
    </location>
</feature>
<feature type="transmembrane region" description="Helical" evidence="1">
    <location>
        <begin position="183"/>
        <end position="203"/>
    </location>
</feature>
<feature type="transmembrane region" description="Helical" evidence="1">
    <location>
        <begin position="217"/>
        <end position="237"/>
    </location>
</feature>
<feature type="transmembrane region" description="Helical" evidence="1">
    <location>
        <begin position="274"/>
        <end position="294"/>
    </location>
</feature>
<feature type="transmembrane region" description="Helical" evidence="1">
    <location>
        <begin position="317"/>
        <end position="337"/>
    </location>
</feature>
<feature type="non-terminal residue">
    <location>
        <position position="356"/>
    </location>
</feature>
<protein>
    <recommendedName>
        <fullName evidence="1">Protein translocase subunit SecY</fullName>
    </recommendedName>
</protein>
<accession>P49976</accession>
<proteinExistence type="inferred from homology"/>
<organism>
    <name type="scientific">Buchnera aphidicola subsp. Acyrthosiphon kondoi</name>
    <name type="common">Acyrthosiphon kondoi symbiotic bacterium</name>
    <dbReference type="NCBI Taxonomy" id="42474"/>
    <lineage>
        <taxon>Bacteria</taxon>
        <taxon>Pseudomonadati</taxon>
        <taxon>Pseudomonadota</taxon>
        <taxon>Gammaproteobacteria</taxon>
        <taxon>Enterobacterales</taxon>
        <taxon>Erwiniaceae</taxon>
        <taxon>Buchnera</taxon>
    </lineage>
</organism>
<gene>
    <name evidence="1" type="primary">secY</name>
</gene>
<reference key="1">
    <citation type="journal article" date="1994" name="DNA Res.">
        <title>Cloning and characterization of the ribosomal protein genes in the spc operon of a prokaryotic endosymbiont of the pea aphid, Acyrthosiphon kondoi.</title>
        <authorList>
            <person name="Abe R."/>
            <person name="Yamashita A."/>
            <person name="Isono K."/>
        </authorList>
    </citation>
    <scope>NUCLEOTIDE SEQUENCE [GENOMIC DNA]</scope>
    <source>
        <strain>Kurashiki</strain>
    </source>
</reference>
<evidence type="ECO:0000255" key="1">
    <source>
        <dbReference type="HAMAP-Rule" id="MF_01465"/>
    </source>
</evidence>
<comment type="function">
    <text evidence="1">The central subunit of the protein translocation channel SecYEG. Consists of two halves formed by TMs 1-5 and 6-10. These two domains form a lateral gate at the front which open onto the bilayer between TMs 2 and 7, and are clamped together by SecE at the back. The channel is closed by both a pore ring composed of hydrophobic SecY resides and a short helix (helix 2A) on the extracellular side of the membrane which forms a plug. The plug probably moves laterally to allow the channel to open. The ring and the pore may move independently.</text>
</comment>
<comment type="subunit">
    <text evidence="1">Component of the Sec protein translocase complex. Heterotrimer consisting of SecY, SecE and SecG subunits. The heterotrimers can form oligomers, although 1 heterotrimer is thought to be able to translocate proteins. Interacts with the ribosome. Interacts with SecDF, and other proteins may be involved. Interacts with SecA.</text>
</comment>
<comment type="subcellular location">
    <subcellularLocation>
        <location evidence="1">Cell membrane</location>
        <topology evidence="1">Multi-pass membrane protein</topology>
    </subcellularLocation>
</comment>
<comment type="similarity">
    <text evidence="1">Belongs to the SecY/SEC61-alpha family.</text>
</comment>
<name>SECY_BUCAK</name>
<dbReference type="EMBL" id="D16555">
    <property type="protein sequence ID" value="BAA03987.1"/>
    <property type="molecule type" value="Genomic_DNA"/>
</dbReference>
<dbReference type="SMR" id="P49976"/>
<dbReference type="GO" id="GO:0005886">
    <property type="term" value="C:plasma membrane"/>
    <property type="evidence" value="ECO:0007669"/>
    <property type="project" value="UniProtKB-SubCell"/>
</dbReference>
<dbReference type="GO" id="GO:0015031">
    <property type="term" value="P:protein transport"/>
    <property type="evidence" value="ECO:0007669"/>
    <property type="project" value="UniProtKB-KW"/>
</dbReference>
<dbReference type="FunFam" id="1.10.3370.10:FF:000001">
    <property type="entry name" value="Preprotein translocase subunit SecY"/>
    <property type="match status" value="1"/>
</dbReference>
<dbReference type="Gene3D" id="1.10.3370.10">
    <property type="entry name" value="SecY subunit domain"/>
    <property type="match status" value="1"/>
</dbReference>
<dbReference type="HAMAP" id="MF_01465">
    <property type="entry name" value="SecY"/>
    <property type="match status" value="1"/>
</dbReference>
<dbReference type="InterPro" id="IPR026593">
    <property type="entry name" value="SecY"/>
</dbReference>
<dbReference type="InterPro" id="IPR002208">
    <property type="entry name" value="SecY/SEC61-alpha"/>
</dbReference>
<dbReference type="InterPro" id="IPR030659">
    <property type="entry name" value="SecY_CS"/>
</dbReference>
<dbReference type="InterPro" id="IPR023201">
    <property type="entry name" value="SecY_dom_sf"/>
</dbReference>
<dbReference type="NCBIfam" id="TIGR00967">
    <property type="entry name" value="3a0501s007"/>
    <property type="match status" value="1"/>
</dbReference>
<dbReference type="PANTHER" id="PTHR10906">
    <property type="entry name" value="SECY/SEC61-ALPHA FAMILY MEMBER"/>
    <property type="match status" value="1"/>
</dbReference>
<dbReference type="Pfam" id="PF00344">
    <property type="entry name" value="SecY"/>
    <property type="match status" value="1"/>
</dbReference>
<dbReference type="PRINTS" id="PR00303">
    <property type="entry name" value="SECYTRNLCASE"/>
</dbReference>
<dbReference type="SUPFAM" id="SSF103491">
    <property type="entry name" value="Preprotein translocase SecY subunit"/>
    <property type="match status" value="1"/>
</dbReference>
<dbReference type="PROSITE" id="PS00755">
    <property type="entry name" value="SECY_1"/>
    <property type="match status" value="1"/>
</dbReference>
<dbReference type="PROSITE" id="PS00756">
    <property type="entry name" value="SECY_2"/>
    <property type="match status" value="1"/>
</dbReference>
<keyword id="KW-1003">Cell membrane</keyword>
<keyword id="KW-0472">Membrane</keyword>
<keyword id="KW-0653">Protein transport</keyword>
<keyword id="KW-0811">Translocation</keyword>
<keyword id="KW-0812">Transmembrane</keyword>
<keyword id="KW-1133">Transmembrane helix</keyword>
<keyword id="KW-0813">Transport</keyword>